<proteinExistence type="inferred from homology"/>
<accession>C0R0B8</accession>
<sequence length="432" mass="48864">MQLIDLVKNAKEATYKLQSLNTDIKNNALLEIAKKIEENKDKIFEANKKDLEYAQKLLDENKISKSMFNRLKLDENKLIDVVSGIRDVVKLEDPINKVLLETELDDNLLLKKISCPIGLIAVIFEARPDVISQISSLCIKSSNAVILKGGSEGENTNKAIYNIIEETLNNIKEFPKNSVNLVFTREDIKELLSMDKYIDLIIPRGGNSLVQYIKSNTNIPVLGHADGICHLYIDESADQEKALKICLDSKAQYPSACNAVETILVNKNIASEYLPKLYNLFKENEIKMNADAEVKKILTSSDIGEVKEWHFEYGDKEVSLKIVSDTEEAYNHINKYGSHHTDSIISENKDNIEKFMTFVDSANVYCNASTRFSDGFRYGFGAEVGISTNKTHARGPVGLEGLTIYKYKIFGNYQIVDDYVNHRASFKHKRIK</sequence>
<dbReference type="EC" id="1.2.1.41" evidence="1"/>
<dbReference type="EMBL" id="CP001357">
    <property type="protein sequence ID" value="ACN83556.1"/>
    <property type="molecule type" value="Genomic_DNA"/>
</dbReference>
<dbReference type="RefSeq" id="WP_012670603.1">
    <property type="nucleotide sequence ID" value="NC_012225.1"/>
</dbReference>
<dbReference type="SMR" id="C0R0B8"/>
<dbReference type="STRING" id="565034.BHWA1_01073"/>
<dbReference type="KEGG" id="bhy:BHWA1_01073"/>
<dbReference type="eggNOG" id="COG0014">
    <property type="taxonomic scope" value="Bacteria"/>
</dbReference>
<dbReference type="HOGENOM" id="CLU_030231_0_0_12"/>
<dbReference type="UniPathway" id="UPA00098">
    <property type="reaction ID" value="UER00360"/>
</dbReference>
<dbReference type="Proteomes" id="UP000001803">
    <property type="component" value="Chromosome"/>
</dbReference>
<dbReference type="GO" id="GO:0005737">
    <property type="term" value="C:cytoplasm"/>
    <property type="evidence" value="ECO:0007669"/>
    <property type="project" value="UniProtKB-SubCell"/>
</dbReference>
<dbReference type="GO" id="GO:0004350">
    <property type="term" value="F:glutamate-5-semialdehyde dehydrogenase activity"/>
    <property type="evidence" value="ECO:0007669"/>
    <property type="project" value="UniProtKB-UniRule"/>
</dbReference>
<dbReference type="GO" id="GO:0050661">
    <property type="term" value="F:NADP binding"/>
    <property type="evidence" value="ECO:0007669"/>
    <property type="project" value="InterPro"/>
</dbReference>
<dbReference type="GO" id="GO:0055129">
    <property type="term" value="P:L-proline biosynthetic process"/>
    <property type="evidence" value="ECO:0007669"/>
    <property type="project" value="UniProtKB-UniRule"/>
</dbReference>
<dbReference type="CDD" id="cd07079">
    <property type="entry name" value="ALDH_F18-19_ProA-GPR"/>
    <property type="match status" value="1"/>
</dbReference>
<dbReference type="FunFam" id="3.40.309.10:FF:000006">
    <property type="entry name" value="Gamma-glutamyl phosphate reductase"/>
    <property type="match status" value="1"/>
</dbReference>
<dbReference type="Gene3D" id="3.40.605.10">
    <property type="entry name" value="Aldehyde Dehydrogenase, Chain A, domain 1"/>
    <property type="match status" value="1"/>
</dbReference>
<dbReference type="Gene3D" id="3.40.309.10">
    <property type="entry name" value="Aldehyde Dehydrogenase, Chain A, domain 2"/>
    <property type="match status" value="1"/>
</dbReference>
<dbReference type="HAMAP" id="MF_00412">
    <property type="entry name" value="ProA"/>
    <property type="match status" value="1"/>
</dbReference>
<dbReference type="InterPro" id="IPR016161">
    <property type="entry name" value="Ald_DH/histidinol_DH"/>
</dbReference>
<dbReference type="InterPro" id="IPR016163">
    <property type="entry name" value="Ald_DH_C"/>
</dbReference>
<dbReference type="InterPro" id="IPR016162">
    <property type="entry name" value="Ald_DH_N"/>
</dbReference>
<dbReference type="InterPro" id="IPR015590">
    <property type="entry name" value="Aldehyde_DH_dom"/>
</dbReference>
<dbReference type="InterPro" id="IPR012134">
    <property type="entry name" value="Glu-5-SA_DH"/>
</dbReference>
<dbReference type="InterPro" id="IPR000965">
    <property type="entry name" value="GPR_dom"/>
</dbReference>
<dbReference type="NCBIfam" id="NF001221">
    <property type="entry name" value="PRK00197.1"/>
    <property type="match status" value="1"/>
</dbReference>
<dbReference type="NCBIfam" id="TIGR00407">
    <property type="entry name" value="proA"/>
    <property type="match status" value="1"/>
</dbReference>
<dbReference type="PANTHER" id="PTHR11063:SF8">
    <property type="entry name" value="DELTA-1-PYRROLINE-5-CARBOXYLATE SYNTHASE"/>
    <property type="match status" value="1"/>
</dbReference>
<dbReference type="PANTHER" id="PTHR11063">
    <property type="entry name" value="GLUTAMATE SEMIALDEHYDE DEHYDROGENASE"/>
    <property type="match status" value="1"/>
</dbReference>
<dbReference type="Pfam" id="PF00171">
    <property type="entry name" value="Aldedh"/>
    <property type="match status" value="1"/>
</dbReference>
<dbReference type="PIRSF" id="PIRSF000151">
    <property type="entry name" value="GPR"/>
    <property type="match status" value="1"/>
</dbReference>
<dbReference type="SUPFAM" id="SSF53720">
    <property type="entry name" value="ALDH-like"/>
    <property type="match status" value="1"/>
</dbReference>
<evidence type="ECO:0000255" key="1">
    <source>
        <dbReference type="HAMAP-Rule" id="MF_00412"/>
    </source>
</evidence>
<comment type="function">
    <text evidence="1">Catalyzes the NADPH-dependent reduction of L-glutamate 5-phosphate into L-glutamate 5-semialdehyde and phosphate. The product spontaneously undergoes cyclization to form 1-pyrroline-5-carboxylate.</text>
</comment>
<comment type="catalytic activity">
    <reaction evidence="1">
        <text>L-glutamate 5-semialdehyde + phosphate + NADP(+) = L-glutamyl 5-phosphate + NADPH + H(+)</text>
        <dbReference type="Rhea" id="RHEA:19541"/>
        <dbReference type="ChEBI" id="CHEBI:15378"/>
        <dbReference type="ChEBI" id="CHEBI:43474"/>
        <dbReference type="ChEBI" id="CHEBI:57783"/>
        <dbReference type="ChEBI" id="CHEBI:58066"/>
        <dbReference type="ChEBI" id="CHEBI:58274"/>
        <dbReference type="ChEBI" id="CHEBI:58349"/>
        <dbReference type="EC" id="1.2.1.41"/>
    </reaction>
</comment>
<comment type="pathway">
    <text evidence="1">Amino-acid biosynthesis; L-proline biosynthesis; L-glutamate 5-semialdehyde from L-glutamate: step 2/2.</text>
</comment>
<comment type="subcellular location">
    <subcellularLocation>
        <location evidence="1">Cytoplasm</location>
    </subcellularLocation>
</comment>
<comment type="similarity">
    <text evidence="1">Belongs to the gamma-glutamyl phosphate reductase family.</text>
</comment>
<reference key="1">
    <citation type="journal article" date="2009" name="PLoS ONE">
        <title>Genome sequence of the pathogenic intestinal spirochete Brachyspira hyodysenteriae reveals adaptations to its lifestyle in the porcine large intestine.</title>
        <authorList>
            <person name="Bellgard M.I."/>
            <person name="Wanchanthuek P."/>
            <person name="La T."/>
            <person name="Ryan K."/>
            <person name="Moolhuijzen P."/>
            <person name="Albertyn Z."/>
            <person name="Shaban B."/>
            <person name="Motro Y."/>
            <person name="Dunn D.S."/>
            <person name="Schibeci D."/>
            <person name="Hunter A."/>
            <person name="Barrero R."/>
            <person name="Phillips N.D."/>
            <person name="Hampson D.J."/>
        </authorList>
    </citation>
    <scope>NUCLEOTIDE SEQUENCE [LARGE SCALE GENOMIC DNA]</scope>
    <source>
        <strain>ATCC 49526 / WA1</strain>
    </source>
</reference>
<protein>
    <recommendedName>
        <fullName evidence="1">Gamma-glutamyl phosphate reductase</fullName>
        <shortName evidence="1">GPR</shortName>
        <ecNumber evidence="1">1.2.1.41</ecNumber>
    </recommendedName>
    <alternativeName>
        <fullName evidence="1">Glutamate-5-semialdehyde dehydrogenase</fullName>
    </alternativeName>
    <alternativeName>
        <fullName evidence="1">Glutamyl-gamma-semialdehyde dehydrogenase</fullName>
        <shortName evidence="1">GSA dehydrogenase</shortName>
    </alternativeName>
</protein>
<name>PROA_BRAHW</name>
<gene>
    <name evidence="1" type="primary">proA</name>
    <name type="ordered locus">BHWA1_01073</name>
</gene>
<feature type="chain" id="PRO_1000193575" description="Gamma-glutamyl phosphate reductase">
    <location>
        <begin position="1"/>
        <end position="432"/>
    </location>
</feature>
<keyword id="KW-0028">Amino-acid biosynthesis</keyword>
<keyword id="KW-0963">Cytoplasm</keyword>
<keyword id="KW-0521">NADP</keyword>
<keyword id="KW-0560">Oxidoreductase</keyword>
<keyword id="KW-0641">Proline biosynthesis</keyword>
<organism>
    <name type="scientific">Brachyspira hyodysenteriae (strain ATCC 49526 / WA1)</name>
    <dbReference type="NCBI Taxonomy" id="565034"/>
    <lineage>
        <taxon>Bacteria</taxon>
        <taxon>Pseudomonadati</taxon>
        <taxon>Spirochaetota</taxon>
        <taxon>Spirochaetia</taxon>
        <taxon>Brachyspirales</taxon>
        <taxon>Brachyspiraceae</taxon>
        <taxon>Brachyspira</taxon>
    </lineage>
</organism>